<organism>
    <name type="scientific">Mus musculus</name>
    <name type="common">Mouse</name>
    <dbReference type="NCBI Taxonomy" id="10090"/>
    <lineage>
        <taxon>Eukaryota</taxon>
        <taxon>Metazoa</taxon>
        <taxon>Chordata</taxon>
        <taxon>Craniata</taxon>
        <taxon>Vertebrata</taxon>
        <taxon>Euteleostomi</taxon>
        <taxon>Mammalia</taxon>
        <taxon>Eutheria</taxon>
        <taxon>Euarchontoglires</taxon>
        <taxon>Glires</taxon>
        <taxon>Rodentia</taxon>
        <taxon>Myomorpha</taxon>
        <taxon>Muroidea</taxon>
        <taxon>Muridae</taxon>
        <taxon>Murinae</taxon>
        <taxon>Mus</taxon>
        <taxon>Mus</taxon>
    </lineage>
</organism>
<gene>
    <name type="primary">Aqp4</name>
</gene>
<comment type="function">
    <text evidence="8 9 10 12 13 14 15">Forms a water-specific channel (PubMed:18286643, PubMed:8660998, PubMed:9276712). Plays an important role in brain water homeostasis and in glymphatic solute transport (PubMed:22896675, PubMed:27751903, PubMed:30557661, PubMed:30561329). Required for a normal rate of water exchange across the blood brain interface (PubMed:30557661). Required for normal levels of cerebrospinal fluid influx into the brain cortex and parenchyma along paravascular spaces that surround penetrating arteries, and for normal drainage of interstitial fluid along paravenous drainage pathways. Thereby, it is required for normal clearance of solutes from the brain interstitial fluid, including soluble beta-amyloid peptides derived from APP (PubMed:22896675, PubMed:27751903, PubMed:30561329). Plays a redundant role in urinary water homeostasis and urinary concentrating ability (PubMed:9276712).</text>
</comment>
<comment type="catalytic activity">
    <reaction evidence="2">
        <text>H2O(in) = H2O(out)</text>
        <dbReference type="Rhea" id="RHEA:29667"/>
        <dbReference type="ChEBI" id="CHEBI:15377"/>
    </reaction>
</comment>
<comment type="subunit">
    <text evidence="1 2">Homotetramer. The tetramers can form oligomeric arrays in membranes. The size of the oligomers differs between tissues and is smaller in skeletal muscle than in brain. Interaction between AQP4 oligomeric arrays in close-by cells can contribute to cell-cell adhesion (By similarity). Part of a complex containing MLC1, TRPV4, HEPACAM and ATP1B1 (By similarity).</text>
</comment>
<comment type="interaction">
    <interactant intactId="EBI-6273066">
        <id>P55088</id>
    </interactant>
    <interactant intactId="EBI-7091763">
        <id>Q9EPK8</id>
        <label>Trpv4</label>
    </interactant>
    <organismsDiffer>false</organismsDiffer>
    <experiments>2</experiments>
</comment>
<comment type="subcellular location">
    <subcellularLocation>
        <location evidence="8 14">Cell membrane</location>
        <topology evidence="2">Multi-pass membrane protein</topology>
    </subcellularLocation>
    <subcellularLocation>
        <location evidence="4 7 10 15">Basolateral cell membrane</location>
        <topology evidence="2">Multi-pass membrane protein</topology>
    </subcellularLocation>
    <subcellularLocation>
        <location evidence="1">Endosome membrane</location>
    </subcellularLocation>
    <subcellularLocation>
        <location evidence="11">Cell membrane</location>
        <location evidence="11">Sarcolemma</location>
        <topology evidence="2">Multi-pass membrane protein</topology>
    </subcellularLocation>
    <subcellularLocation>
        <location evidence="9">Cell projection</location>
    </subcellularLocation>
    <text evidence="1 9">Activation of the vasopressin receptor AVPR1A triggers AQP4 phosphorylation at Ser-180 and promotes its internalization from the cell membrane (By similarity). Detected on brain astrocyte processes and astrocyte endfeet close to capillaries (PubMed:22896675).</text>
</comment>
<comment type="alternative products">
    <event type="alternative splicing"/>
    <isoform>
        <id>P55088-1</id>
        <name>2</name>
        <name>MIWC2</name>
        <name>AQP4-M1</name>
        <sequence type="displayed"/>
    </isoform>
    <isoform>
        <id>P55088-2</id>
        <name>1</name>
        <name>MIWC1</name>
        <name>AQP4-M23</name>
        <sequence type="described" ref="VSP_003233"/>
    </isoform>
    <isoform>
        <id>P55088-3</id>
        <name>3</name>
        <name>MIWC3</name>
        <sequence type="described" ref="VSP_003234"/>
    </isoform>
</comment>
<comment type="tissue specificity">
    <text evidence="4 6 7 9 10 11 14 15">Detected in brain cortex, especially around cortical blood vessels, and subjacent to pia, with lower levels in parenchymal membranes (PubMed:27751903). Detected in ependymal and astroglial cells in brain (PubMed:22896675, PubMed:27751903, PubMed:8660998, PubMed:9276712). Detected in supporting Hensen's cells, inner sulcus cells and Claudius cells in the inner ear (PubMed:11406631). Detected in skeletal muscle (PubMed:29055082). Detected in gastric parietal cells (PubMed:10915655). Detected in principal cells in collecting ducts in kidney medulla (at protein level) (PubMed:16641094, PubMed:9276712). Detected in brain, heart and skeletal muscle (PubMed:8660998).</text>
</comment>
<comment type="domain">
    <text evidence="2">Aquaporins contain two tandem repeats each containing three membrane-spanning domains and a pore-forming loop with the signature motif Asn-Pro-Ala (NPA).</text>
</comment>
<comment type="PTM">
    <text evidence="1 8">Phosphorylation by PKC at Ser-180 reduces conductance by 50% (By similarity). Phosphorylation by PKG at Ser-111 in response to glutamate increases conductance by 40%; this increase is not due to increased presence at the cell membrane (PubMed:18286643).</text>
</comment>
<comment type="PTM">
    <text evidence="1">Isoform 2: Palmitoylated on its N-terminal region. Isoform 1: Not palmitoylated.</text>
</comment>
<comment type="disruption phenotype">
    <text evidence="4 6 9 10 12 13 15">Mice are born at the expected Mendelian rate and display no obvious phenotype (PubMed:10915655, PubMed:9276712). They have normal urine osmolality under standard conditions, but display reduced urine osmolality after 36 hour water deprivation (PubMed:9276712). Adult mice display incereased brain water content (PubMed:27751903). Mutant mice display a reduced rate of water flux across the blood brain interface (PubMed:30557661). Fluid transport from the brain paravascular space into the surrounding interstitium is abolished. Besides, mice display strongly reduced solute clearance from the brain interstitium (PubMed:22896675). Mice display reduced cerebrospinal fluid influx into the brain, and reduced brain solute transport via the cerebrospinal fluid from the cisterna to the brain parenchyma (PubMed:22896675, PubMed:30561329). The organ of Corti in the inner ear appears morphologically normal, but mice have considerably impaired hearing at an age of 4 to 5 weeks (PubMed:11406631). Mice display unchanged gastric acid secretion (PubMed:10915655).</text>
</comment>
<comment type="similarity">
    <text evidence="19">Belongs to the MIP/aquaporin (TC 1.A.8) family.</text>
</comment>
<proteinExistence type="evidence at protein level"/>
<evidence type="ECO:0000250" key="1">
    <source>
        <dbReference type="UniProtKB" id="P47863"/>
    </source>
</evidence>
<evidence type="ECO:0000250" key="2">
    <source>
        <dbReference type="UniProtKB" id="P55087"/>
    </source>
</evidence>
<evidence type="ECO:0000255" key="3"/>
<evidence type="ECO:0000269" key="4">
    <source>
    </source>
</evidence>
<evidence type="ECO:0000269" key="5">
    <source>
    </source>
</evidence>
<evidence type="ECO:0000269" key="6">
    <source>
    </source>
</evidence>
<evidence type="ECO:0000269" key="7">
    <source>
    </source>
</evidence>
<evidence type="ECO:0000269" key="8">
    <source>
    </source>
</evidence>
<evidence type="ECO:0000269" key="9">
    <source>
    </source>
</evidence>
<evidence type="ECO:0000269" key="10">
    <source>
    </source>
</evidence>
<evidence type="ECO:0000269" key="11">
    <source>
    </source>
</evidence>
<evidence type="ECO:0000269" key="12">
    <source>
    </source>
</evidence>
<evidence type="ECO:0000269" key="13">
    <source>
    </source>
</evidence>
<evidence type="ECO:0000269" key="14">
    <source>
    </source>
</evidence>
<evidence type="ECO:0000269" key="15">
    <source>
    </source>
</evidence>
<evidence type="ECO:0000303" key="16">
    <source>
    </source>
</evidence>
<evidence type="ECO:0000303" key="17">
    <source>
    </source>
</evidence>
<evidence type="ECO:0000303" key="18">
    <source>
    </source>
</evidence>
<evidence type="ECO:0000305" key="19"/>
<evidence type="ECO:0007744" key="20">
    <source>
    </source>
</evidence>
<name>AQP4_MOUSE</name>
<sequence>MSDGAAARRWGKCGHSCSRESIMVAFKGVWTQAFWKAVSAEFLATLIFVLLGVGSTINWGGSENPLPVDMVLISLCFGLSIATMVQCFGHISGGHINPAVTVAMVCTRKISIAKSVFYIIAQCLGAIIGAGILYLVTPPSVVGGLGVTTVHGNLTAGHGLLVELIITFQLVFTIFASCDSKRTDVTGSIALAIGFSVAIGHLFAINYTGASMNPARSFGPAVIMGNWANHWIYWVGPIMGAVLAGALYEYVFCPDVELKRRLKEAFSKAAQQTKGSYMEVEDNRSQVETEDLILKPGVVHVIDIDRGEEKKGKDSSGEVLSSV</sequence>
<reference key="1">
    <citation type="journal article" date="1996" name="Genomics">
        <title>Gene structure, cDNA cloning, and expression of a mouse mercurial-insensitive water channel.</title>
        <authorList>
            <person name="Ma T."/>
            <person name="Yang B."/>
            <person name="Verkman A.S."/>
        </authorList>
    </citation>
    <scope>NUCLEOTIDE SEQUENCE [MRNA] (ISOFORMS 1; 2 AND 3)</scope>
    <scope>FUNCTION</scope>
    <scope>SUBCELLULAR LOCATION</scope>
    <scope>TISSUE SPECIFICITY</scope>
    <source>
        <strain>C57BL/6J</strain>
        <tissue>Brain</tissue>
    </source>
</reference>
<reference key="2">
    <citation type="journal article" date="1997" name="Genomics">
        <title>Cloning and chromosomal localization of mouse aquaporin 4: exclusion of a candidate mutant phenotype, ataxia.</title>
        <authorList>
            <person name="Turtzo L.C."/>
            <person name="Lee M.D."/>
            <person name="Lu M."/>
            <person name="Smith B.L."/>
            <person name="Copeland N.G."/>
            <person name="Gilbert D.J."/>
            <person name="Jenkins N.A."/>
            <person name="Agre P."/>
        </authorList>
    </citation>
    <scope>NUCLEOTIDE SEQUENCE [MRNA] (ISOFORM 2)</scope>
    <source>
        <strain>C57BL/6J</strain>
        <tissue>Cerebellum</tissue>
    </source>
</reference>
<reference key="3">
    <citation type="journal article" date="2000" name="Pediatr. Res.">
        <title>Identification of a new form of AQP4 mRNA that is developmentally expressed in mouse brain.</title>
        <authorList>
            <person name="Zelenin S."/>
            <person name="Gunnarson E."/>
            <person name="Alikina T."/>
            <person name="Bondar A."/>
            <person name="Aperia A."/>
        </authorList>
    </citation>
    <scope>NUCLEOTIDE SEQUENCE [MRNA] (ISOFORMS 1 AND 2)</scope>
    <scope>VARIANT ARG-4</scope>
</reference>
<reference key="4">
    <citation type="submission" date="2005-07" db="EMBL/GenBank/DDBJ databases">
        <title>Cloning of mouse full open reading frames in Gateway(R) system entry vector (pDONR201).</title>
        <authorList>
            <person name="Ebert L."/>
            <person name="Muenstermann E."/>
            <person name="Schatten R."/>
            <person name="Henze S."/>
            <person name="Bohn E."/>
            <person name="Mollenhauer J."/>
            <person name="Wiemann S."/>
            <person name="Schick M."/>
            <person name="Korn B."/>
        </authorList>
    </citation>
    <scope>NUCLEOTIDE SEQUENCE [LARGE SCALE MRNA] (ISOFORM 2)</scope>
</reference>
<reference key="5">
    <citation type="journal article" date="2004" name="Genome Res.">
        <title>The status, quality, and expansion of the NIH full-length cDNA project: the Mammalian Gene Collection (MGC).</title>
        <authorList>
            <consortium name="The MGC Project Team"/>
        </authorList>
    </citation>
    <scope>NUCLEOTIDE SEQUENCE [LARGE SCALE MRNA] (ISOFORM 1)</scope>
    <source>
        <tissue>Colon</tissue>
    </source>
</reference>
<reference key="6">
    <citation type="journal article" date="1997" name="J. Clin. Invest.">
        <title>Generation and phenotype of a transgenic knockout mouse lacking the mercurial-insensitive water channel aquaporin-4.</title>
        <authorList>
            <person name="Ma T."/>
            <person name="Yang B."/>
            <person name="Gillespie A."/>
            <person name="Carlson E.J."/>
            <person name="Epstein C.J."/>
            <person name="Verkman A.S."/>
        </authorList>
    </citation>
    <scope>FUNCTION</scope>
    <scope>DISRUPTION PHENOTYPE</scope>
    <scope>SUBCELLULAR LOCATION</scope>
    <scope>TISSUE SPECIFICITY</scope>
</reference>
<reference key="7">
    <citation type="journal article" date="2000" name="Am. J. Physiol.">
        <title>Gastric acid secretion in aquaporin-4 knockout mice.</title>
        <authorList>
            <person name="Wang K.S."/>
            <person name="Komar A.R."/>
            <person name="Ma T."/>
            <person name="Filiz F."/>
            <person name="McLeroy J."/>
            <person name="Hoda K."/>
            <person name="Verkman A.S."/>
            <person name="Bastidas J.A."/>
        </authorList>
    </citation>
    <scope>DISRUPTION PHENOTYPE</scope>
    <scope>SUBCELLULAR LOCATION</scope>
    <scope>TISSUE SPECIFICITY</scope>
</reference>
<reference key="8">
    <citation type="journal article" date="2001" name="J. Biol. Chem.">
        <title>Impaired hearing in mice lacking aquaporin-4 water channels.</title>
        <authorList>
            <person name="Li J."/>
            <person name="Verkman A.S."/>
        </authorList>
    </citation>
    <scope>DISRUPTION PHENOTYPE</scope>
    <scope>TISSUE SPECIFICITY</scope>
</reference>
<reference key="9">
    <citation type="journal article" date="2006" name="Proc. Natl. Acad. Sci. U.S.A.">
        <title>Congenital progressive hydronephrosis (cph) is caused by an S256L mutation in aquaporin-2 that affects its phosphorylation and apical membrane accumulation.</title>
        <authorList>
            <person name="McDill B.W."/>
            <person name="Li S.Z."/>
            <person name="Kovach P.A."/>
            <person name="Ding L."/>
            <person name="Chen F."/>
        </authorList>
    </citation>
    <scope>SUBCELLULAR LOCATION</scope>
    <scope>TISSUE SPECIFICITY</scope>
</reference>
<reference key="10">
    <citation type="journal article" date="2008" name="Glia">
        <title>Identification of a molecular target for glutamate regulation of astrocyte water permeability.</title>
        <authorList>
            <person name="Gunnarson E."/>
            <person name="Zelenina M."/>
            <person name="Axehult G."/>
            <person name="Song Y."/>
            <person name="Bondar A."/>
            <person name="Krieger P."/>
            <person name="Brismar H."/>
            <person name="Zelenin S."/>
            <person name="Aperia A."/>
        </authorList>
    </citation>
    <scope>FUNCTION</scope>
    <scope>SUBCELLULAR LOCATION</scope>
    <scope>PHOSPHORYLATION AT SER-111</scope>
    <scope>MUTAGENESIS OF SER-111</scope>
</reference>
<reference key="11">
    <citation type="journal article" date="2010" name="Cell">
        <title>A tissue-specific atlas of mouse protein phosphorylation and expression.</title>
        <authorList>
            <person name="Huttlin E.L."/>
            <person name="Jedrychowski M.P."/>
            <person name="Elias J.E."/>
            <person name="Goswami T."/>
            <person name="Rad R."/>
            <person name="Beausoleil S.A."/>
            <person name="Villen J."/>
            <person name="Haas W."/>
            <person name="Sowa M.E."/>
            <person name="Gygi S.P."/>
        </authorList>
    </citation>
    <scope>PHOSPHORYLATION [LARGE SCALE ANALYSIS] AT SER-285 AND THR-289</scope>
    <scope>IDENTIFICATION BY MASS SPECTROMETRY [LARGE SCALE ANALYSIS]</scope>
    <source>
        <tissue>Brain</tissue>
        <tissue>Kidney</tissue>
    </source>
</reference>
<reference key="12">
    <citation type="journal article" date="2012" name="Sci. Transl. Med.">
        <title>A paravascular pathway facilitates CSF flow through the brain parenchyma and the clearance of interstitial solutes, including amyloid beta.</title>
        <authorList>
            <person name="Iliff J.J."/>
            <person name="Wang M."/>
            <person name="Liao Y."/>
            <person name="Plogg B.A."/>
            <person name="Peng W."/>
            <person name="Gundersen G.A."/>
            <person name="Benveniste H."/>
            <person name="Vates G.E."/>
            <person name="Deane R."/>
            <person name="Goldman S.A."/>
            <person name="Nagelhus E.A."/>
            <person name="Nedergaard M."/>
        </authorList>
    </citation>
    <scope>FUNCTION</scope>
    <scope>DISRUPTION PHENOTYPE</scope>
    <scope>TISSUE SPECIFICITY</scope>
    <scope>SUBCELLULAR LOCATION</scope>
</reference>
<reference key="13">
    <citation type="journal article" date="2016" name="Mol. Cell. Neurosci.">
        <title>Removal of aquaporin-4 from glial and ependymal membranes causes brain water accumulation.</title>
        <authorList>
            <person name="Vindedal G.F."/>
            <person name="Thoren A.E."/>
            <person name="Jensen V."/>
            <person name="Klungland A."/>
            <person name="Zhang Y."/>
            <person name="Holtzman M.J."/>
            <person name="Ottersen O.P."/>
            <person name="Nagelhus E.A."/>
        </authorList>
    </citation>
    <scope>FUNCTION</scope>
    <scope>DISRUPTION PHENOTYPE</scope>
    <scope>SUBCELLULAR LOCATION</scope>
    <scope>TISSUE SPECIFICITY</scope>
</reference>
<reference key="14">
    <citation type="journal article" date="2018" name="Elife">
        <title>Aquaporin-4-dependent glymphatic solute transport in the rodent brain.</title>
        <authorList>
            <person name="Mestre H."/>
            <person name="Hablitz L.M."/>
            <person name="Xavier A.L."/>
            <person name="Feng W."/>
            <person name="Zou W."/>
            <person name="Pu T."/>
            <person name="Monai H."/>
            <person name="Murlidharan G."/>
            <person name="Castellanos Rivera R.M."/>
            <person name="Simon M.J."/>
            <person name="Pike M.M."/>
            <person name="Pla V."/>
            <person name="Du T."/>
            <person name="Kress B.T."/>
            <person name="Wang X."/>
            <person name="Plog B.A."/>
            <person name="Thrane A.S."/>
            <person name="Lundgaard I."/>
            <person name="Abe Y."/>
            <person name="Yasui M."/>
            <person name="Thomas J.H."/>
            <person name="Xiao M."/>
            <person name="Hirase H."/>
            <person name="Asokan A."/>
            <person name="Iliff J.J."/>
            <person name="Nedergaard M."/>
        </authorList>
    </citation>
    <scope>FUNCTION</scope>
    <scope>DISRUPTION PHENOTYPE</scope>
</reference>
<reference key="15">
    <citation type="journal article" date="2018" name="J. Cell. Mol. Med.">
        <title>Supramolecular aggregation of aquaporin-4 is different in muscle and brain: correlation with tissue susceptibility in neuromyelitis optica.</title>
        <authorList>
            <person name="Rosito S."/>
            <person name="Nicchia G.P."/>
            <person name="Palazzo C."/>
            <person name="Lia A."/>
            <person name="Buccoliero C."/>
            <person name="Pisani F."/>
            <person name="Svelto M."/>
            <person name="Trojano M."/>
            <person name="Frigeri A."/>
        </authorList>
    </citation>
    <scope>TISSUE SPECIFICITY</scope>
    <scope>SUBCELLULAR LOCATION</scope>
</reference>
<reference key="16">
    <citation type="journal article" date="2019" name="Neuroimage">
        <title>Non-invasive MRI of brain clearance pathways using multiple echo time arterial spin labelling: an aquaporin-4 study.</title>
        <authorList>
            <person name="Ohene Y."/>
            <person name="Harrison I.F."/>
            <person name="Nahavandi P."/>
            <person name="Ismail O."/>
            <person name="Bird E.V."/>
            <person name="Ottersen O.P."/>
            <person name="Nagelhus E.A."/>
            <person name="Thomas D.L."/>
            <person name="Lythgoe M.F."/>
            <person name="Wells J.A."/>
        </authorList>
    </citation>
    <scope>FUNCTION</scope>
    <scope>DISRUPTION PHENOTYPE</scope>
</reference>
<keyword id="KW-0025">Alternative splicing</keyword>
<keyword id="KW-1003">Cell membrane</keyword>
<keyword id="KW-0966">Cell projection</keyword>
<keyword id="KW-0967">Endosome</keyword>
<keyword id="KW-0325">Glycoprotein</keyword>
<keyword id="KW-0449">Lipoprotein</keyword>
<keyword id="KW-0472">Membrane</keyword>
<keyword id="KW-0564">Palmitate</keyword>
<keyword id="KW-0597">Phosphoprotein</keyword>
<keyword id="KW-1185">Reference proteome</keyword>
<keyword id="KW-0677">Repeat</keyword>
<keyword id="KW-0812">Transmembrane</keyword>
<keyword id="KW-1133">Transmembrane helix</keyword>
<keyword id="KW-0813">Transport</keyword>
<dbReference type="EMBL" id="U48398">
    <property type="protein sequence ID" value="AAB41569.1"/>
    <property type="molecule type" value="mRNA"/>
</dbReference>
<dbReference type="EMBL" id="U48397">
    <property type="protein sequence ID" value="AAB41568.1"/>
    <property type="molecule type" value="mRNA"/>
</dbReference>
<dbReference type="EMBL" id="U33012">
    <property type="protein sequence ID" value="AAA84923.1"/>
    <property type="molecule type" value="mRNA"/>
</dbReference>
<dbReference type="EMBL" id="U48400">
    <property type="protein sequence ID" value="AAB41571.1"/>
    <property type="molecule type" value="Genomic_DNA"/>
</dbReference>
<dbReference type="EMBL" id="U48399">
    <property type="protein sequence ID" value="AAB41570.1"/>
    <property type="molecule type" value="mRNA"/>
</dbReference>
<dbReference type="EMBL" id="U88623">
    <property type="protein sequence ID" value="AAC53155.1"/>
    <property type="molecule type" value="mRNA"/>
</dbReference>
<dbReference type="EMBL" id="AF469168">
    <property type="protein sequence ID" value="AAL73545.1"/>
    <property type="molecule type" value="mRNA"/>
</dbReference>
<dbReference type="EMBL" id="AF469169">
    <property type="protein sequence ID" value="AAL73546.1"/>
    <property type="molecule type" value="mRNA"/>
</dbReference>
<dbReference type="EMBL" id="AF219992">
    <property type="protein sequence ID" value="AAG44243.2"/>
    <property type="molecule type" value="Genomic_DNA"/>
</dbReference>
<dbReference type="EMBL" id="CT010362">
    <property type="protein sequence ID" value="CAJ18569.1"/>
    <property type="molecule type" value="mRNA"/>
</dbReference>
<dbReference type="EMBL" id="BC024526">
    <property type="protein sequence ID" value="AAH24526.1"/>
    <property type="molecule type" value="mRNA"/>
</dbReference>
<dbReference type="CCDS" id="CCDS29073.1">
    <molecule id="P55088-1"/>
</dbReference>
<dbReference type="CCDS" id="CCDS89196.1">
    <molecule id="P55088-2"/>
</dbReference>
<dbReference type="RefSeq" id="NP_001295570.1">
    <molecule id="P55088-2"/>
    <property type="nucleotide sequence ID" value="NM_001308641.1"/>
</dbReference>
<dbReference type="RefSeq" id="NP_001295571.1">
    <molecule id="P55088-2"/>
    <property type="nucleotide sequence ID" value="NM_001308642.1"/>
</dbReference>
<dbReference type="RefSeq" id="NP_001295572.1">
    <molecule id="P55088-2"/>
    <property type="nucleotide sequence ID" value="NM_001308643.1"/>
</dbReference>
<dbReference type="RefSeq" id="NP_001295573.1">
    <molecule id="P55088-2"/>
    <property type="nucleotide sequence ID" value="NM_001308644.1"/>
</dbReference>
<dbReference type="RefSeq" id="NP_001295574.1">
    <molecule id="P55088-2"/>
    <property type="nucleotide sequence ID" value="NM_001308645.1"/>
</dbReference>
<dbReference type="RefSeq" id="NP_001295575.1">
    <molecule id="P55088-2"/>
    <property type="nucleotide sequence ID" value="NM_001308646.1"/>
</dbReference>
<dbReference type="RefSeq" id="NP_001295576.1">
    <molecule id="P55088-2"/>
    <property type="nucleotide sequence ID" value="NM_001308647.2"/>
</dbReference>
<dbReference type="RefSeq" id="NP_001304658.1">
    <property type="nucleotide sequence ID" value="NM_001317729.1"/>
</dbReference>
<dbReference type="RefSeq" id="NP_033830.2">
    <property type="nucleotide sequence ID" value="NM_009700.3"/>
</dbReference>
<dbReference type="SMR" id="P55088"/>
<dbReference type="BioGRID" id="198173">
    <property type="interactions" value="17"/>
</dbReference>
<dbReference type="DIP" id="DIP-59602N"/>
<dbReference type="FunCoup" id="P55088">
    <property type="interactions" value="163"/>
</dbReference>
<dbReference type="IntAct" id="P55088">
    <property type="interactions" value="2"/>
</dbReference>
<dbReference type="STRING" id="10090.ENSMUSP00000078088"/>
<dbReference type="ChEMBL" id="CHEMBL5965"/>
<dbReference type="GlyCosmos" id="P55088">
    <property type="glycosylation" value="2 sites, No reported glycans"/>
</dbReference>
<dbReference type="GlyGen" id="P55088">
    <property type="glycosylation" value="6 sites, 1 N-linked glycan (1 site), 1 O-linked glycan (1 site)"/>
</dbReference>
<dbReference type="iPTMnet" id="P55088"/>
<dbReference type="PhosphoSitePlus" id="P55088"/>
<dbReference type="SwissPalm" id="P55088"/>
<dbReference type="PaxDb" id="10090-ENSMUSP00000078088"/>
<dbReference type="PeptideAtlas" id="P55088"/>
<dbReference type="ProteomicsDB" id="273910">
    <molecule id="P55088-1"/>
</dbReference>
<dbReference type="ProteomicsDB" id="273911">
    <molecule id="P55088-2"/>
</dbReference>
<dbReference type="ProteomicsDB" id="273912">
    <molecule id="P55088-3"/>
</dbReference>
<dbReference type="Antibodypedia" id="3103">
    <property type="antibodies" value="601 antibodies from 38 providers"/>
</dbReference>
<dbReference type="DNASU" id="11829"/>
<dbReference type="Ensembl" id="ENSMUST00000234053.2">
    <molecule id="P55088-2"/>
    <property type="protein sequence ID" value="ENSMUSP00000157337.2"/>
    <property type="gene ID" value="ENSMUSG00000024411.12"/>
</dbReference>
<dbReference type="Ensembl" id="ENSMUST00000234391.2">
    <molecule id="P55088-2"/>
    <property type="protein sequence ID" value="ENSMUSP00000157347.2"/>
    <property type="gene ID" value="ENSMUSG00000024411.12"/>
</dbReference>
<dbReference type="Ensembl" id="ENSMUST00000234466.2">
    <molecule id="P55088-2"/>
    <property type="protein sequence ID" value="ENSMUSP00000157324.2"/>
    <property type="gene ID" value="ENSMUSG00000024411.12"/>
</dbReference>
<dbReference type="Ensembl" id="ENSMUST00000234473.2">
    <molecule id="P55088-2"/>
    <property type="protein sequence ID" value="ENSMUSP00000157152.2"/>
    <property type="gene ID" value="ENSMUSG00000024411.12"/>
</dbReference>
<dbReference type="Ensembl" id="ENSMUST00000234518.2">
    <molecule id="P55088-2"/>
    <property type="protein sequence ID" value="ENSMUSP00000157239.2"/>
    <property type="gene ID" value="ENSMUSG00000024411.12"/>
</dbReference>
<dbReference type="Ensembl" id="ENSMUST00000234643.2">
    <molecule id="P55088-2"/>
    <property type="protein sequence ID" value="ENSMUSP00000157060.2"/>
    <property type="gene ID" value="ENSMUSG00000024411.12"/>
</dbReference>
<dbReference type="Ensembl" id="ENSMUST00000235044.2">
    <molecule id="P55088-2"/>
    <property type="protein sequence ID" value="ENSMUSP00000157000.2"/>
    <property type="gene ID" value="ENSMUSG00000024411.12"/>
</dbReference>
<dbReference type="GeneID" id="11829"/>
<dbReference type="KEGG" id="mmu:11829"/>
<dbReference type="UCSC" id="uc008edq.2">
    <molecule id="P55088-1"/>
    <property type="organism name" value="mouse"/>
</dbReference>
<dbReference type="UCSC" id="uc008eds.2">
    <molecule id="P55088-3"/>
    <property type="organism name" value="mouse"/>
</dbReference>
<dbReference type="AGR" id="MGI:107387"/>
<dbReference type="CTD" id="361"/>
<dbReference type="MGI" id="MGI:107387">
    <property type="gene designation" value="Aqp4"/>
</dbReference>
<dbReference type="VEuPathDB" id="HostDB:ENSMUSG00000024411"/>
<dbReference type="eggNOG" id="KOG0223">
    <property type="taxonomic scope" value="Eukaryota"/>
</dbReference>
<dbReference type="GeneTree" id="ENSGT00940000156037"/>
<dbReference type="InParanoid" id="P55088"/>
<dbReference type="OrthoDB" id="31559at9989"/>
<dbReference type="PhylomeDB" id="P55088"/>
<dbReference type="TreeFam" id="TF312940"/>
<dbReference type="Reactome" id="R-MMU-432040">
    <property type="pathway name" value="Vasopressin regulates renal water homeostasis via Aquaporins"/>
</dbReference>
<dbReference type="Reactome" id="R-MMU-432047">
    <property type="pathway name" value="Passive transport by Aquaporins"/>
</dbReference>
<dbReference type="BioGRID-ORCS" id="11829">
    <property type="hits" value="2 hits in 75 CRISPR screens"/>
</dbReference>
<dbReference type="CD-CODE" id="CE726F99">
    <property type="entry name" value="Postsynaptic density"/>
</dbReference>
<dbReference type="ChiTaRS" id="Aqp4">
    <property type="organism name" value="mouse"/>
</dbReference>
<dbReference type="PRO" id="PR:P55088"/>
<dbReference type="Proteomes" id="UP000000589">
    <property type="component" value="Chromosome 18"/>
</dbReference>
<dbReference type="RNAct" id="P55088">
    <property type="molecule type" value="protein"/>
</dbReference>
<dbReference type="Bgee" id="ENSMUSG00000024411">
    <property type="expression patterns" value="Expressed in pontine nuclear group and 186 other cell types or tissues"/>
</dbReference>
<dbReference type="ExpressionAtlas" id="P55088">
    <property type="expression patterns" value="baseline and differential"/>
</dbReference>
<dbReference type="GO" id="GO:0097450">
    <property type="term" value="C:astrocyte end-foot"/>
    <property type="evidence" value="ECO:0000314"/>
    <property type="project" value="UniProtKB"/>
</dbReference>
<dbReference type="GO" id="GO:0016323">
    <property type="term" value="C:basolateral plasma membrane"/>
    <property type="evidence" value="ECO:0000314"/>
    <property type="project" value="UniProtKB"/>
</dbReference>
<dbReference type="GO" id="GO:0005911">
    <property type="term" value="C:cell-cell junction"/>
    <property type="evidence" value="ECO:0000314"/>
    <property type="project" value="UniProtKB"/>
</dbReference>
<dbReference type="GO" id="GO:0005737">
    <property type="term" value="C:cytoplasm"/>
    <property type="evidence" value="ECO:0000314"/>
    <property type="project" value="UniProtKB"/>
</dbReference>
<dbReference type="GO" id="GO:0010008">
    <property type="term" value="C:endosome membrane"/>
    <property type="evidence" value="ECO:0007669"/>
    <property type="project" value="UniProtKB-SubCell"/>
</dbReference>
<dbReference type="GO" id="GO:0005576">
    <property type="term" value="C:extracellular region"/>
    <property type="evidence" value="ECO:0007669"/>
    <property type="project" value="GOC"/>
</dbReference>
<dbReference type="GO" id="GO:0016020">
    <property type="term" value="C:membrane"/>
    <property type="evidence" value="ECO:0000303"/>
    <property type="project" value="UniProtKB"/>
</dbReference>
<dbReference type="GO" id="GO:0005886">
    <property type="term" value="C:plasma membrane"/>
    <property type="evidence" value="ECO:0000314"/>
    <property type="project" value="UniProtKB"/>
</dbReference>
<dbReference type="GO" id="GO:0042383">
    <property type="term" value="C:sarcolemma"/>
    <property type="evidence" value="ECO:0000314"/>
    <property type="project" value="UniProtKB"/>
</dbReference>
<dbReference type="GO" id="GO:0015250">
    <property type="term" value="F:water channel activity"/>
    <property type="evidence" value="ECO:0000314"/>
    <property type="project" value="UniProtKB"/>
</dbReference>
<dbReference type="GO" id="GO:0090660">
    <property type="term" value="P:cerebrospinal fluid circulation"/>
    <property type="evidence" value="ECO:0000315"/>
    <property type="project" value="UniProtKB"/>
</dbReference>
<dbReference type="GO" id="GO:0033326">
    <property type="term" value="P:cerebrospinal fluid secretion"/>
    <property type="evidence" value="ECO:0000315"/>
    <property type="project" value="CACAO"/>
</dbReference>
<dbReference type="GO" id="GO:0051649">
    <property type="term" value="P:establishment of localization in cell"/>
    <property type="evidence" value="ECO:0000315"/>
    <property type="project" value="MGI"/>
</dbReference>
<dbReference type="GO" id="GO:0009992">
    <property type="term" value="P:intracellular water homeostasis"/>
    <property type="evidence" value="ECO:0000314"/>
    <property type="project" value="UniProtKB"/>
</dbReference>
<dbReference type="GO" id="GO:0050891">
    <property type="term" value="P:multicellular organismal-level water homeostasis"/>
    <property type="evidence" value="ECO:0000314"/>
    <property type="project" value="GO_Central"/>
</dbReference>
<dbReference type="GO" id="GO:0051289">
    <property type="term" value="P:protein homotetramerization"/>
    <property type="evidence" value="ECO:0000250"/>
    <property type="project" value="UniProtKB"/>
</dbReference>
<dbReference type="GO" id="GO:0070295">
    <property type="term" value="P:renal water absorption"/>
    <property type="evidence" value="ECO:0000315"/>
    <property type="project" value="MGI"/>
</dbReference>
<dbReference type="GO" id="GO:0007605">
    <property type="term" value="P:sensory perception of sound"/>
    <property type="evidence" value="ECO:0000315"/>
    <property type="project" value="MGI"/>
</dbReference>
<dbReference type="GO" id="GO:0006833">
    <property type="term" value="P:water transport"/>
    <property type="evidence" value="ECO:0000314"/>
    <property type="project" value="UniProtKB"/>
</dbReference>
<dbReference type="CDD" id="cd00333">
    <property type="entry name" value="MIP"/>
    <property type="match status" value="1"/>
</dbReference>
<dbReference type="FunFam" id="1.20.1080.10:FF:000009">
    <property type="entry name" value="aquaporin-4 isoform X1"/>
    <property type="match status" value="1"/>
</dbReference>
<dbReference type="Gene3D" id="1.20.1080.10">
    <property type="entry name" value="Glycerol uptake facilitator protein"/>
    <property type="match status" value="1"/>
</dbReference>
<dbReference type="InterPro" id="IPR023271">
    <property type="entry name" value="Aquaporin-like"/>
</dbReference>
<dbReference type="InterPro" id="IPR034294">
    <property type="entry name" value="Aquaporin_transptr"/>
</dbReference>
<dbReference type="InterPro" id="IPR000425">
    <property type="entry name" value="MIP"/>
</dbReference>
<dbReference type="InterPro" id="IPR022357">
    <property type="entry name" value="MIP_CS"/>
</dbReference>
<dbReference type="NCBIfam" id="TIGR00861">
    <property type="entry name" value="MIP"/>
    <property type="match status" value="1"/>
</dbReference>
<dbReference type="PANTHER" id="PTHR19139">
    <property type="entry name" value="AQUAPORIN TRANSPORTER"/>
    <property type="match status" value="1"/>
</dbReference>
<dbReference type="PANTHER" id="PTHR19139:SF34">
    <property type="entry name" value="AQUAPORIN-4"/>
    <property type="match status" value="1"/>
</dbReference>
<dbReference type="Pfam" id="PF00230">
    <property type="entry name" value="MIP"/>
    <property type="match status" value="1"/>
</dbReference>
<dbReference type="PRINTS" id="PR02016">
    <property type="entry name" value="AQUAPORIN4"/>
</dbReference>
<dbReference type="PRINTS" id="PR00783">
    <property type="entry name" value="MINTRINSICP"/>
</dbReference>
<dbReference type="SUPFAM" id="SSF81338">
    <property type="entry name" value="Aquaporin-like"/>
    <property type="match status" value="1"/>
</dbReference>
<dbReference type="PROSITE" id="PS00221">
    <property type="entry name" value="MIP"/>
    <property type="match status" value="1"/>
</dbReference>
<protein>
    <recommendedName>
        <fullName>Aquaporin-4</fullName>
        <shortName>AQP-4</shortName>
    </recommendedName>
    <alternativeName>
        <fullName evidence="18">Mercurial-insensitive water channel</fullName>
        <shortName evidence="18">MIWC</shortName>
    </alternativeName>
    <alternativeName>
        <fullName>WCH4</fullName>
    </alternativeName>
</protein>
<accession>P55088</accession>
<accession>P97818</accession>
<accession>Q4FJP1</accession>
<accession>Q61131</accession>
<accession>Q61132</accession>
<accession>Q8VHE4</accession>
<accession>Q8VHE5</accession>
<accession>Q9EQI3</accession>
<feature type="chain" id="PRO_0000063949" description="Aquaporin-4">
    <location>
        <begin position="1"/>
        <end position="323"/>
    </location>
</feature>
<feature type="topological domain" description="Cytoplasmic" evidence="19">
    <location>
        <begin position="1"/>
        <end position="36"/>
    </location>
</feature>
<feature type="transmembrane region" description="Helical" evidence="2">
    <location>
        <begin position="37"/>
        <end position="57"/>
    </location>
</feature>
<feature type="topological domain" description="Extracellular" evidence="19">
    <location>
        <begin position="58"/>
        <end position="69"/>
    </location>
</feature>
<feature type="transmembrane region" description="Helical" evidence="2">
    <location>
        <begin position="70"/>
        <end position="89"/>
    </location>
</feature>
<feature type="topological domain" description="Cytoplasmic" evidence="19">
    <location>
        <begin position="90"/>
        <end position="93"/>
    </location>
</feature>
<feature type="intramembrane region" description="Discontinuously helical" evidence="2">
    <location>
        <begin position="94"/>
        <end position="101"/>
    </location>
</feature>
<feature type="topological domain" description="Cytoplasmic" evidence="19">
    <location>
        <begin position="102"/>
        <end position="115"/>
    </location>
</feature>
<feature type="transmembrane region" description="Helical" evidence="2">
    <location>
        <begin position="116"/>
        <end position="136"/>
    </location>
</feature>
<feature type="topological domain" description="Extracellular" evidence="19">
    <location>
        <begin position="137"/>
        <end position="155"/>
    </location>
</feature>
<feature type="transmembrane region" description="Helical" evidence="2">
    <location>
        <begin position="156"/>
        <end position="176"/>
    </location>
</feature>
<feature type="topological domain" description="Cytoplasmic" evidence="19">
    <location>
        <begin position="177"/>
        <end position="184"/>
    </location>
</feature>
<feature type="transmembrane region" description="Helical" evidence="2">
    <location>
        <begin position="185"/>
        <end position="205"/>
    </location>
</feature>
<feature type="topological domain" description="Extracellular" evidence="19">
    <location>
        <begin position="206"/>
        <end position="208"/>
    </location>
</feature>
<feature type="intramembrane region" description="Discontinuously helical" evidence="2">
    <location>
        <begin position="209"/>
        <end position="222"/>
    </location>
</feature>
<feature type="topological domain" description="Extracellular" evidence="19">
    <location>
        <begin position="223"/>
        <end position="231"/>
    </location>
</feature>
<feature type="transmembrane region" description="Helical" evidence="2">
    <location>
        <begin position="232"/>
        <end position="252"/>
    </location>
</feature>
<feature type="topological domain" description="Cytoplasmic" evidence="19">
    <location>
        <begin position="253"/>
        <end position="323"/>
    </location>
</feature>
<feature type="short sequence motif" description="NPA 1" evidence="2">
    <location>
        <begin position="97"/>
        <end position="99"/>
    </location>
</feature>
<feature type="short sequence motif" description="NPA 2" evidence="2">
    <location>
        <begin position="213"/>
        <end position="215"/>
    </location>
</feature>
<feature type="modified residue" description="Phosphoserine; by PKG" evidence="8">
    <location>
        <position position="111"/>
    </location>
</feature>
<feature type="modified residue" description="Phosphoserine; by PKC" evidence="1">
    <location>
        <position position="180"/>
    </location>
</feature>
<feature type="modified residue" description="Phosphoserine" evidence="1">
    <location>
        <position position="276"/>
    </location>
</feature>
<feature type="modified residue" description="Phosphoserine" evidence="20">
    <location>
        <position position="285"/>
    </location>
</feature>
<feature type="modified residue" description="Phosphothreonine" evidence="20">
    <location>
        <position position="289"/>
    </location>
</feature>
<feature type="modified residue" description="Phosphoserine" evidence="1">
    <location>
        <position position="321"/>
    </location>
</feature>
<feature type="lipid moiety-binding region" description="S-palmitoyl cysteine" evidence="1">
    <location>
        <position position="13"/>
    </location>
</feature>
<feature type="lipid moiety-binding region" description="S-palmitoyl cysteine" evidence="1">
    <location>
        <position position="17"/>
    </location>
</feature>
<feature type="glycosylation site" description="N-linked (GlcNAc...) asparagine" evidence="3">
    <location>
        <position position="153"/>
    </location>
</feature>
<feature type="glycosylation site" description="N-linked (GlcNAc...) asparagine" evidence="3">
    <location>
        <position position="206"/>
    </location>
</feature>
<feature type="splice variant" id="VSP_003233" description="In isoform 1." evidence="16 17 18">
    <location>
        <begin position="1"/>
        <end position="22"/>
    </location>
</feature>
<feature type="splice variant" id="VSP_003234" description="In isoform 3." evidence="18">
    <original>MSDGAAARRWG</original>
    <variation>MVHGFGCFVFFFLISLSSLWASEDSTCNSTLPLCHLATTLDCC</variation>
    <location>
        <begin position="1"/>
        <end position="11"/>
    </location>
</feature>
<feature type="sequence variant" evidence="5">
    <original>G</original>
    <variation>R</variation>
    <location>
        <position position="4"/>
    </location>
</feature>
<feature type="mutagenesis site" description="Loss of phosphorylation by PKG (in vitro). No effect on location at cell membrane." evidence="8">
    <original>S</original>
    <variation>A</variation>
    <location>
        <position position="111"/>
    </location>
</feature>
<feature type="sequence conflict" description="In Ref. 1; AAB41571." evidence="19" ref="1">
    <original>A</original>
    <variation>S</variation>
    <location>
        <position position="37"/>
    </location>
</feature>
<feature type="sequence conflict" description="In Ref. 1; AAB41569/AAB41570." evidence="19" ref="1">
    <location>
        <position position="51"/>
    </location>
</feature>
<feature type="sequence conflict" description="In Ref. 1; AAB41569/AAB41570." evidence="19" ref="1">
    <original>F</original>
    <variation>L</variation>
    <location>
        <position position="88"/>
    </location>
</feature>
<feature type="sequence conflict" description="In Ref. 1; AAB41569/AAB41570." evidence="19" ref="1">
    <original>I</original>
    <variation>V</variation>
    <location>
        <position position="174"/>
    </location>
</feature>
<feature type="sequence conflict" description="In Ref. 1; AAB41569/AAB41570." evidence="19" ref="1">
    <original>K</original>
    <variation>R</variation>
    <location>
        <position position="313"/>
    </location>
</feature>